<keyword id="KW-0903">Direct protein sequencing</keyword>
<keyword id="KW-0349">Heme</keyword>
<keyword id="KW-0408">Iron</keyword>
<keyword id="KW-0479">Metal-binding</keyword>
<keyword id="KW-0561">Oxygen transport</keyword>
<keyword id="KW-0813">Transport</keyword>
<protein>
    <recommendedName>
        <fullName>Hemoglobin subunit alpha-1</fullName>
    </recommendedName>
    <alternativeName>
        <fullName>Alpha-1-globin</fullName>
    </alternativeName>
    <alternativeName>
        <fullName>Hemoglobin alpha-1 chain</fullName>
    </alternativeName>
</protein>
<evidence type="ECO:0000255" key="1">
    <source>
        <dbReference type="PROSITE-ProRule" id="PRU00238"/>
    </source>
</evidence>
<name>HBA1_TORMA</name>
<feature type="chain" id="PRO_0000052784" description="Hemoglobin subunit alpha-1">
    <location>
        <begin position="1"/>
        <end position="141"/>
    </location>
</feature>
<feature type="domain" description="Globin" evidence="1">
    <location>
        <begin position="1"/>
        <end position="141"/>
    </location>
</feature>
<feature type="binding site" evidence="1">
    <location>
        <position position="59"/>
    </location>
    <ligand>
        <name>O2</name>
        <dbReference type="ChEBI" id="CHEBI:15379"/>
    </ligand>
</feature>
<feature type="binding site" description="proximal binding residue" evidence="1">
    <location>
        <position position="88"/>
    </location>
    <ligand>
        <name>heme b</name>
        <dbReference type="ChEBI" id="CHEBI:60344"/>
    </ligand>
    <ligandPart>
        <name>Fe</name>
        <dbReference type="ChEBI" id="CHEBI:18248"/>
    </ligandPart>
</feature>
<accession>P20244</accession>
<dbReference type="PIR" id="S05418">
    <property type="entry name" value="HARYM"/>
</dbReference>
<dbReference type="SMR" id="P20244"/>
<dbReference type="GO" id="GO:0072562">
    <property type="term" value="C:blood microparticle"/>
    <property type="evidence" value="ECO:0007669"/>
    <property type="project" value="TreeGrafter"/>
</dbReference>
<dbReference type="GO" id="GO:0031838">
    <property type="term" value="C:haptoglobin-hemoglobin complex"/>
    <property type="evidence" value="ECO:0007669"/>
    <property type="project" value="TreeGrafter"/>
</dbReference>
<dbReference type="GO" id="GO:0005833">
    <property type="term" value="C:hemoglobin complex"/>
    <property type="evidence" value="ECO:0007669"/>
    <property type="project" value="InterPro"/>
</dbReference>
<dbReference type="GO" id="GO:0031720">
    <property type="term" value="F:haptoglobin binding"/>
    <property type="evidence" value="ECO:0007669"/>
    <property type="project" value="TreeGrafter"/>
</dbReference>
<dbReference type="GO" id="GO:0020037">
    <property type="term" value="F:heme binding"/>
    <property type="evidence" value="ECO:0007669"/>
    <property type="project" value="InterPro"/>
</dbReference>
<dbReference type="GO" id="GO:0046872">
    <property type="term" value="F:metal ion binding"/>
    <property type="evidence" value="ECO:0007669"/>
    <property type="project" value="UniProtKB-KW"/>
</dbReference>
<dbReference type="GO" id="GO:0043177">
    <property type="term" value="F:organic acid binding"/>
    <property type="evidence" value="ECO:0007669"/>
    <property type="project" value="TreeGrafter"/>
</dbReference>
<dbReference type="GO" id="GO:0019825">
    <property type="term" value="F:oxygen binding"/>
    <property type="evidence" value="ECO:0007669"/>
    <property type="project" value="InterPro"/>
</dbReference>
<dbReference type="GO" id="GO:0005344">
    <property type="term" value="F:oxygen carrier activity"/>
    <property type="evidence" value="ECO:0007669"/>
    <property type="project" value="UniProtKB-KW"/>
</dbReference>
<dbReference type="GO" id="GO:0004601">
    <property type="term" value="F:peroxidase activity"/>
    <property type="evidence" value="ECO:0007669"/>
    <property type="project" value="TreeGrafter"/>
</dbReference>
<dbReference type="GO" id="GO:0042744">
    <property type="term" value="P:hydrogen peroxide catabolic process"/>
    <property type="evidence" value="ECO:0007669"/>
    <property type="project" value="TreeGrafter"/>
</dbReference>
<dbReference type="CDD" id="cd08927">
    <property type="entry name" value="Hb-alpha-like"/>
    <property type="match status" value="1"/>
</dbReference>
<dbReference type="Gene3D" id="1.10.490.10">
    <property type="entry name" value="Globins"/>
    <property type="match status" value="1"/>
</dbReference>
<dbReference type="InterPro" id="IPR000971">
    <property type="entry name" value="Globin"/>
</dbReference>
<dbReference type="InterPro" id="IPR009050">
    <property type="entry name" value="Globin-like_sf"/>
</dbReference>
<dbReference type="InterPro" id="IPR012292">
    <property type="entry name" value="Globin/Proto"/>
</dbReference>
<dbReference type="InterPro" id="IPR002338">
    <property type="entry name" value="Hemoglobin_a-typ"/>
</dbReference>
<dbReference type="InterPro" id="IPR050056">
    <property type="entry name" value="Hemoglobin_oxygen_transport"/>
</dbReference>
<dbReference type="PANTHER" id="PTHR11442">
    <property type="entry name" value="HEMOGLOBIN FAMILY MEMBER"/>
    <property type="match status" value="1"/>
</dbReference>
<dbReference type="Pfam" id="PF00042">
    <property type="entry name" value="Globin"/>
    <property type="match status" value="1"/>
</dbReference>
<dbReference type="PRINTS" id="PR00612">
    <property type="entry name" value="ALPHAHAEM"/>
</dbReference>
<dbReference type="SUPFAM" id="SSF46458">
    <property type="entry name" value="Globin-like"/>
    <property type="match status" value="1"/>
</dbReference>
<dbReference type="PROSITE" id="PS01033">
    <property type="entry name" value="GLOBIN"/>
    <property type="match status" value="1"/>
</dbReference>
<sequence>VLSEGNKKAIKNLLQKIHSQTEVLGAEALARLFECHPQTKSYFPKFSGFSANDKRVKHHGALVLKALVDTNKHLDDLPHHLNKLAEKHGKGLLVDPHNFKLFSDCIAVTLAAHLQEFSPETHCAVDKFLEEVTYQLSSLYR</sequence>
<comment type="function">
    <text>Involved in oxygen transport from the lung to the various peripheral tissues.</text>
</comment>
<comment type="subunit">
    <text>Heterotetramer of two alpha chains and two beta chains.</text>
</comment>
<comment type="tissue specificity">
    <text>Red blood cells.</text>
</comment>
<comment type="similarity">
    <text evidence="1">Belongs to the globin family.</text>
</comment>
<organism>
    <name type="scientific">Torpedo marmorata</name>
    <name type="common">Marbled electric ray</name>
    <dbReference type="NCBI Taxonomy" id="7788"/>
    <lineage>
        <taxon>Eukaryota</taxon>
        <taxon>Metazoa</taxon>
        <taxon>Chordata</taxon>
        <taxon>Craniata</taxon>
        <taxon>Vertebrata</taxon>
        <taxon>Chondrichthyes</taxon>
        <taxon>Elasmobranchii</taxon>
        <taxon>Batoidea</taxon>
        <taxon>Torpediniformes</taxon>
        <taxon>Torpedinidae</taxon>
        <taxon>Torpedo</taxon>
    </lineage>
</organism>
<reference key="1">
    <citation type="journal article" date="1989" name="Biol. Chem. Hoppe-Seyler">
        <title>The primary structure of electric ray hemoglobin (Torpedo marmorata). Bohr effect and phosphate interaction.</title>
        <authorList>
            <person name="Huber F."/>
            <person name="Braunitzer G."/>
        </authorList>
    </citation>
    <scope>PROTEIN SEQUENCE</scope>
</reference>
<proteinExistence type="evidence at protein level"/>